<proteinExistence type="inferred from homology"/>
<dbReference type="EC" id="2.7.7.4" evidence="2"/>
<dbReference type="EMBL" id="CU928145">
    <property type="protein sequence ID" value="CAU98906.1"/>
    <property type="molecule type" value="Genomic_DNA"/>
</dbReference>
<dbReference type="RefSeq" id="WP_001090348.1">
    <property type="nucleotide sequence ID" value="NC_011748.1"/>
</dbReference>
<dbReference type="SMR" id="B7LEG9"/>
<dbReference type="KEGG" id="eck:EC55989_3024"/>
<dbReference type="HOGENOM" id="CLU_007265_5_2_6"/>
<dbReference type="UniPathway" id="UPA00140">
    <property type="reaction ID" value="UER00204"/>
</dbReference>
<dbReference type="Proteomes" id="UP000000746">
    <property type="component" value="Chromosome"/>
</dbReference>
<dbReference type="GO" id="GO:0005524">
    <property type="term" value="F:ATP binding"/>
    <property type="evidence" value="ECO:0007669"/>
    <property type="project" value="UniProtKB-KW"/>
</dbReference>
<dbReference type="GO" id="GO:0005525">
    <property type="term" value="F:GTP binding"/>
    <property type="evidence" value="ECO:0007669"/>
    <property type="project" value="UniProtKB-UniRule"/>
</dbReference>
<dbReference type="GO" id="GO:0003924">
    <property type="term" value="F:GTPase activity"/>
    <property type="evidence" value="ECO:0007669"/>
    <property type="project" value="InterPro"/>
</dbReference>
<dbReference type="GO" id="GO:0004781">
    <property type="term" value="F:sulfate adenylyltransferase (ATP) activity"/>
    <property type="evidence" value="ECO:0007669"/>
    <property type="project" value="UniProtKB-UniRule"/>
</dbReference>
<dbReference type="GO" id="GO:0070814">
    <property type="term" value="P:hydrogen sulfide biosynthetic process"/>
    <property type="evidence" value="ECO:0007669"/>
    <property type="project" value="UniProtKB-UniRule"/>
</dbReference>
<dbReference type="GO" id="GO:0000103">
    <property type="term" value="P:sulfate assimilation"/>
    <property type="evidence" value="ECO:0007669"/>
    <property type="project" value="UniProtKB-UniRule"/>
</dbReference>
<dbReference type="CDD" id="cd04166">
    <property type="entry name" value="CysN_ATPS"/>
    <property type="match status" value="1"/>
</dbReference>
<dbReference type="CDD" id="cd03695">
    <property type="entry name" value="CysN_NodQ_II"/>
    <property type="match status" value="1"/>
</dbReference>
<dbReference type="CDD" id="cd04095">
    <property type="entry name" value="CysN_NoDQ_III"/>
    <property type="match status" value="1"/>
</dbReference>
<dbReference type="FunFam" id="2.40.30.10:FF:000027">
    <property type="entry name" value="Sulfate adenylyltransferase subunit 1"/>
    <property type="match status" value="1"/>
</dbReference>
<dbReference type="FunFam" id="2.40.30.10:FF:000031">
    <property type="entry name" value="Sulfate adenylyltransferase subunit 1"/>
    <property type="match status" value="1"/>
</dbReference>
<dbReference type="FunFam" id="3.40.50.300:FF:000119">
    <property type="entry name" value="Sulfate adenylyltransferase subunit 1"/>
    <property type="match status" value="1"/>
</dbReference>
<dbReference type="Gene3D" id="3.40.50.300">
    <property type="entry name" value="P-loop containing nucleotide triphosphate hydrolases"/>
    <property type="match status" value="1"/>
</dbReference>
<dbReference type="Gene3D" id="2.40.30.10">
    <property type="entry name" value="Translation factors"/>
    <property type="match status" value="2"/>
</dbReference>
<dbReference type="HAMAP" id="MF_00062">
    <property type="entry name" value="Sulf_adenylyltr_sub1"/>
    <property type="match status" value="1"/>
</dbReference>
<dbReference type="InterPro" id="IPR041757">
    <property type="entry name" value="CysN_GTP-bd"/>
</dbReference>
<dbReference type="InterPro" id="IPR044138">
    <property type="entry name" value="CysN_II"/>
</dbReference>
<dbReference type="InterPro" id="IPR044139">
    <property type="entry name" value="CysN_NoDQ_III"/>
</dbReference>
<dbReference type="InterPro" id="IPR031157">
    <property type="entry name" value="G_TR_CS"/>
</dbReference>
<dbReference type="InterPro" id="IPR054696">
    <property type="entry name" value="GTP-eEF1A_C"/>
</dbReference>
<dbReference type="InterPro" id="IPR027417">
    <property type="entry name" value="P-loop_NTPase"/>
</dbReference>
<dbReference type="InterPro" id="IPR005225">
    <property type="entry name" value="Small_GTP-bd"/>
</dbReference>
<dbReference type="InterPro" id="IPR011779">
    <property type="entry name" value="SO4_adenylTrfase_lsu"/>
</dbReference>
<dbReference type="InterPro" id="IPR000795">
    <property type="entry name" value="T_Tr_GTP-bd_dom"/>
</dbReference>
<dbReference type="InterPro" id="IPR050100">
    <property type="entry name" value="TRAFAC_GTPase_members"/>
</dbReference>
<dbReference type="InterPro" id="IPR009000">
    <property type="entry name" value="Transl_B-barrel_sf"/>
</dbReference>
<dbReference type="InterPro" id="IPR009001">
    <property type="entry name" value="Transl_elong_EF1A/Init_IF2_C"/>
</dbReference>
<dbReference type="NCBIfam" id="TIGR02034">
    <property type="entry name" value="CysN"/>
    <property type="match status" value="1"/>
</dbReference>
<dbReference type="NCBIfam" id="NF003478">
    <property type="entry name" value="PRK05124.1"/>
    <property type="match status" value="1"/>
</dbReference>
<dbReference type="NCBIfam" id="TIGR00231">
    <property type="entry name" value="small_GTP"/>
    <property type="match status" value="1"/>
</dbReference>
<dbReference type="PANTHER" id="PTHR23115">
    <property type="entry name" value="TRANSLATION FACTOR"/>
    <property type="match status" value="1"/>
</dbReference>
<dbReference type="Pfam" id="PF22594">
    <property type="entry name" value="GTP-eEF1A_C"/>
    <property type="match status" value="1"/>
</dbReference>
<dbReference type="Pfam" id="PF00009">
    <property type="entry name" value="GTP_EFTU"/>
    <property type="match status" value="1"/>
</dbReference>
<dbReference type="PRINTS" id="PR00315">
    <property type="entry name" value="ELONGATNFCT"/>
</dbReference>
<dbReference type="SUPFAM" id="SSF50465">
    <property type="entry name" value="EF-Tu/eEF-1alpha/eIF2-gamma C-terminal domain"/>
    <property type="match status" value="1"/>
</dbReference>
<dbReference type="SUPFAM" id="SSF52540">
    <property type="entry name" value="P-loop containing nucleoside triphosphate hydrolases"/>
    <property type="match status" value="1"/>
</dbReference>
<dbReference type="SUPFAM" id="SSF50447">
    <property type="entry name" value="Translation proteins"/>
    <property type="match status" value="1"/>
</dbReference>
<dbReference type="PROSITE" id="PS00301">
    <property type="entry name" value="G_TR_1"/>
    <property type="match status" value="1"/>
</dbReference>
<dbReference type="PROSITE" id="PS51722">
    <property type="entry name" value="G_TR_2"/>
    <property type="match status" value="1"/>
</dbReference>
<sequence length="475" mass="52631">MNTALAQQIANEGGVEAWMIAQQHKSLLRFLTCGSVDDGKSTLIGRLLHDTRQIYEDQLSSLHNDSKRHGTQGEKLDLALLVDGLQAEREQGITIDVAYRYFSTEKRKFIIADTPGHEQYTRNMATGASTCELAILLIDARKGVLDQTRRHSFISTLLGIKHLVVAINKMDLVDYSEETFTRIREDYLTFAEQLPGNLDIRFVPLSALEGDNVASQSESMPWYSGPTLLEVLETVEIQRVVDAQPMRFPVQYVNRPNLDFRGYAGTLASGRVEVGQRVKVLPSGVESNVARIVTFDGDREEAFAGEAITLVLTDEIDISRGDLLLAADEALPAVQSASVDVVWMAEQPLSPGQSYDIKIAGKKTRARVDGIRYQVDINNLTQREVENLPLNGIGLVDLTFDEPLVLDRYQQNPVTGGLIFIDRLSNVTVGAGMVHEPVSQATAAPSEFSAFELELNALVRRHFPHWGARDLLGDK</sequence>
<evidence type="ECO:0000250" key="1"/>
<evidence type="ECO:0000255" key="2">
    <source>
        <dbReference type="HAMAP-Rule" id="MF_00062"/>
    </source>
</evidence>
<gene>
    <name evidence="2" type="primary">cysN</name>
    <name type="ordered locus">EC55989_3024</name>
</gene>
<reference key="1">
    <citation type="journal article" date="2009" name="PLoS Genet.">
        <title>Organised genome dynamics in the Escherichia coli species results in highly diverse adaptive paths.</title>
        <authorList>
            <person name="Touchon M."/>
            <person name="Hoede C."/>
            <person name="Tenaillon O."/>
            <person name="Barbe V."/>
            <person name="Baeriswyl S."/>
            <person name="Bidet P."/>
            <person name="Bingen E."/>
            <person name="Bonacorsi S."/>
            <person name="Bouchier C."/>
            <person name="Bouvet O."/>
            <person name="Calteau A."/>
            <person name="Chiapello H."/>
            <person name="Clermont O."/>
            <person name="Cruveiller S."/>
            <person name="Danchin A."/>
            <person name="Diard M."/>
            <person name="Dossat C."/>
            <person name="Karoui M.E."/>
            <person name="Frapy E."/>
            <person name="Garry L."/>
            <person name="Ghigo J.M."/>
            <person name="Gilles A.M."/>
            <person name="Johnson J."/>
            <person name="Le Bouguenec C."/>
            <person name="Lescat M."/>
            <person name="Mangenot S."/>
            <person name="Martinez-Jehanne V."/>
            <person name="Matic I."/>
            <person name="Nassif X."/>
            <person name="Oztas S."/>
            <person name="Petit M.A."/>
            <person name="Pichon C."/>
            <person name="Rouy Z."/>
            <person name="Ruf C.S."/>
            <person name="Schneider D."/>
            <person name="Tourret J."/>
            <person name="Vacherie B."/>
            <person name="Vallenet D."/>
            <person name="Medigue C."/>
            <person name="Rocha E.P.C."/>
            <person name="Denamur E."/>
        </authorList>
    </citation>
    <scope>NUCLEOTIDE SEQUENCE [LARGE SCALE GENOMIC DNA]</scope>
    <source>
        <strain>55989 / EAEC</strain>
    </source>
</reference>
<organism>
    <name type="scientific">Escherichia coli (strain 55989 / EAEC)</name>
    <dbReference type="NCBI Taxonomy" id="585055"/>
    <lineage>
        <taxon>Bacteria</taxon>
        <taxon>Pseudomonadati</taxon>
        <taxon>Pseudomonadota</taxon>
        <taxon>Gammaproteobacteria</taxon>
        <taxon>Enterobacterales</taxon>
        <taxon>Enterobacteriaceae</taxon>
        <taxon>Escherichia</taxon>
    </lineage>
</organism>
<protein>
    <recommendedName>
        <fullName evidence="2">Sulfate adenylyltransferase subunit 1</fullName>
        <ecNumber evidence="2">2.7.7.4</ecNumber>
    </recommendedName>
    <alternativeName>
        <fullName evidence="2">ATP-sulfurylase large subunit</fullName>
    </alternativeName>
    <alternativeName>
        <fullName evidence="2">Sulfate adenylate transferase</fullName>
        <shortName evidence="2">SAT</shortName>
    </alternativeName>
</protein>
<keyword id="KW-0067">ATP-binding</keyword>
<keyword id="KW-0342">GTP-binding</keyword>
<keyword id="KW-0547">Nucleotide-binding</keyword>
<keyword id="KW-0548">Nucleotidyltransferase</keyword>
<keyword id="KW-1185">Reference proteome</keyword>
<keyword id="KW-0808">Transferase</keyword>
<feature type="chain" id="PRO_1000117913" description="Sulfate adenylyltransferase subunit 1">
    <location>
        <begin position="1"/>
        <end position="475"/>
    </location>
</feature>
<feature type="domain" description="tr-type G">
    <location>
        <begin position="25"/>
        <end position="239"/>
    </location>
</feature>
<feature type="region of interest" description="G1" evidence="1">
    <location>
        <begin position="34"/>
        <end position="41"/>
    </location>
</feature>
<feature type="region of interest" description="G2" evidence="1">
    <location>
        <begin position="92"/>
        <end position="96"/>
    </location>
</feature>
<feature type="region of interest" description="G3" evidence="1">
    <location>
        <begin position="113"/>
        <end position="116"/>
    </location>
</feature>
<feature type="region of interest" description="G4" evidence="1">
    <location>
        <begin position="168"/>
        <end position="171"/>
    </location>
</feature>
<feature type="region of interest" description="G5" evidence="1">
    <location>
        <begin position="206"/>
        <end position="208"/>
    </location>
</feature>
<feature type="binding site" evidence="2">
    <location>
        <begin position="34"/>
        <end position="41"/>
    </location>
    <ligand>
        <name>GTP</name>
        <dbReference type="ChEBI" id="CHEBI:37565"/>
    </ligand>
</feature>
<feature type="binding site" evidence="2">
    <location>
        <begin position="113"/>
        <end position="117"/>
    </location>
    <ligand>
        <name>GTP</name>
        <dbReference type="ChEBI" id="CHEBI:37565"/>
    </ligand>
</feature>
<feature type="binding site" evidence="2">
    <location>
        <begin position="168"/>
        <end position="171"/>
    </location>
    <ligand>
        <name>GTP</name>
        <dbReference type="ChEBI" id="CHEBI:37565"/>
    </ligand>
</feature>
<accession>B7LEG9</accession>
<name>CYSN_ECO55</name>
<comment type="function">
    <text evidence="2">With CysD forms the ATP sulfurylase (ATPS) that catalyzes the adenylation of sulfate producing adenosine 5'-phosphosulfate (APS) and diphosphate, the first enzymatic step in sulfur assimilation pathway. APS synthesis involves the formation of a high-energy phosphoric-sulfuric acid anhydride bond driven by GTP hydrolysis by CysN coupled to ATP hydrolysis by CysD.</text>
</comment>
<comment type="catalytic activity">
    <reaction evidence="2">
        <text>sulfate + ATP + H(+) = adenosine 5'-phosphosulfate + diphosphate</text>
        <dbReference type="Rhea" id="RHEA:18133"/>
        <dbReference type="ChEBI" id="CHEBI:15378"/>
        <dbReference type="ChEBI" id="CHEBI:16189"/>
        <dbReference type="ChEBI" id="CHEBI:30616"/>
        <dbReference type="ChEBI" id="CHEBI:33019"/>
        <dbReference type="ChEBI" id="CHEBI:58243"/>
        <dbReference type="EC" id="2.7.7.4"/>
    </reaction>
</comment>
<comment type="pathway">
    <text evidence="2">Sulfur metabolism; hydrogen sulfide biosynthesis; sulfite from sulfate: step 1/3.</text>
</comment>
<comment type="subunit">
    <text evidence="2">Heterodimer composed of CysD, the smaller subunit, and CysN.</text>
</comment>
<comment type="similarity">
    <text evidence="2">Belongs to the TRAFAC class translation factor GTPase superfamily. Classic translation factor GTPase family. CysN/NodQ subfamily.</text>
</comment>